<gene>
    <name evidence="1" type="primary">rplA</name>
    <name type="ordered locus">Shew185_0186</name>
</gene>
<reference key="1">
    <citation type="submission" date="2007-07" db="EMBL/GenBank/DDBJ databases">
        <title>Complete sequence of chromosome of Shewanella baltica OS185.</title>
        <authorList>
            <consortium name="US DOE Joint Genome Institute"/>
            <person name="Copeland A."/>
            <person name="Lucas S."/>
            <person name="Lapidus A."/>
            <person name="Barry K."/>
            <person name="Glavina del Rio T."/>
            <person name="Dalin E."/>
            <person name="Tice H."/>
            <person name="Pitluck S."/>
            <person name="Sims D."/>
            <person name="Brettin T."/>
            <person name="Bruce D."/>
            <person name="Detter J.C."/>
            <person name="Han C."/>
            <person name="Schmutz J."/>
            <person name="Larimer F."/>
            <person name="Land M."/>
            <person name="Hauser L."/>
            <person name="Kyrpides N."/>
            <person name="Mikhailova N."/>
            <person name="Brettar I."/>
            <person name="Rodrigues J."/>
            <person name="Konstantinidis K."/>
            <person name="Tiedje J."/>
            <person name="Richardson P."/>
        </authorList>
    </citation>
    <scope>NUCLEOTIDE SEQUENCE [LARGE SCALE GENOMIC DNA]</scope>
    <source>
        <strain>OS185</strain>
    </source>
</reference>
<accession>A6WHR8</accession>
<comment type="function">
    <text evidence="1">Binds directly to 23S rRNA. The L1 stalk is quite mobile in the ribosome, and is involved in E site tRNA release.</text>
</comment>
<comment type="function">
    <text evidence="1">Protein L1 is also a translational repressor protein, it controls the translation of the L11 operon by binding to its mRNA.</text>
</comment>
<comment type="subunit">
    <text evidence="1">Part of the 50S ribosomal subunit.</text>
</comment>
<comment type="similarity">
    <text evidence="1">Belongs to the universal ribosomal protein uL1 family.</text>
</comment>
<feature type="chain" id="PRO_1000051921" description="Large ribosomal subunit protein uL1">
    <location>
        <begin position="1"/>
        <end position="233"/>
    </location>
</feature>
<dbReference type="EMBL" id="CP000753">
    <property type="protein sequence ID" value="ABS06357.1"/>
    <property type="molecule type" value="Genomic_DNA"/>
</dbReference>
<dbReference type="RefSeq" id="WP_006083610.1">
    <property type="nucleotide sequence ID" value="NC_009665.1"/>
</dbReference>
<dbReference type="SMR" id="A6WHR8"/>
<dbReference type="GeneID" id="11770550"/>
<dbReference type="KEGG" id="sbm:Shew185_0186"/>
<dbReference type="HOGENOM" id="CLU_062853_0_0_6"/>
<dbReference type="GO" id="GO:0022625">
    <property type="term" value="C:cytosolic large ribosomal subunit"/>
    <property type="evidence" value="ECO:0007669"/>
    <property type="project" value="TreeGrafter"/>
</dbReference>
<dbReference type="GO" id="GO:0019843">
    <property type="term" value="F:rRNA binding"/>
    <property type="evidence" value="ECO:0007669"/>
    <property type="project" value="UniProtKB-UniRule"/>
</dbReference>
<dbReference type="GO" id="GO:0003735">
    <property type="term" value="F:structural constituent of ribosome"/>
    <property type="evidence" value="ECO:0007669"/>
    <property type="project" value="InterPro"/>
</dbReference>
<dbReference type="GO" id="GO:0000049">
    <property type="term" value="F:tRNA binding"/>
    <property type="evidence" value="ECO:0007669"/>
    <property type="project" value="UniProtKB-KW"/>
</dbReference>
<dbReference type="GO" id="GO:0006417">
    <property type="term" value="P:regulation of translation"/>
    <property type="evidence" value="ECO:0007669"/>
    <property type="project" value="UniProtKB-KW"/>
</dbReference>
<dbReference type="GO" id="GO:0006412">
    <property type="term" value="P:translation"/>
    <property type="evidence" value="ECO:0007669"/>
    <property type="project" value="UniProtKB-UniRule"/>
</dbReference>
<dbReference type="CDD" id="cd00403">
    <property type="entry name" value="Ribosomal_L1"/>
    <property type="match status" value="1"/>
</dbReference>
<dbReference type="FunFam" id="3.40.50.790:FF:000001">
    <property type="entry name" value="50S ribosomal protein L1"/>
    <property type="match status" value="1"/>
</dbReference>
<dbReference type="Gene3D" id="3.30.190.20">
    <property type="match status" value="1"/>
</dbReference>
<dbReference type="Gene3D" id="3.40.50.790">
    <property type="match status" value="1"/>
</dbReference>
<dbReference type="HAMAP" id="MF_01318_B">
    <property type="entry name" value="Ribosomal_uL1_B"/>
    <property type="match status" value="1"/>
</dbReference>
<dbReference type="InterPro" id="IPR005878">
    <property type="entry name" value="Ribosom_uL1_bac-type"/>
</dbReference>
<dbReference type="InterPro" id="IPR002143">
    <property type="entry name" value="Ribosomal_uL1"/>
</dbReference>
<dbReference type="InterPro" id="IPR023674">
    <property type="entry name" value="Ribosomal_uL1-like"/>
</dbReference>
<dbReference type="InterPro" id="IPR028364">
    <property type="entry name" value="Ribosomal_uL1/biogenesis"/>
</dbReference>
<dbReference type="InterPro" id="IPR016095">
    <property type="entry name" value="Ribosomal_uL1_3-a/b-sand"/>
</dbReference>
<dbReference type="InterPro" id="IPR023673">
    <property type="entry name" value="Ribosomal_uL1_CS"/>
</dbReference>
<dbReference type="NCBIfam" id="TIGR01169">
    <property type="entry name" value="rplA_bact"/>
    <property type="match status" value="1"/>
</dbReference>
<dbReference type="PANTHER" id="PTHR36427">
    <property type="entry name" value="54S RIBOSOMAL PROTEIN L1, MITOCHONDRIAL"/>
    <property type="match status" value="1"/>
</dbReference>
<dbReference type="PANTHER" id="PTHR36427:SF3">
    <property type="entry name" value="LARGE RIBOSOMAL SUBUNIT PROTEIN UL1M"/>
    <property type="match status" value="1"/>
</dbReference>
<dbReference type="Pfam" id="PF00687">
    <property type="entry name" value="Ribosomal_L1"/>
    <property type="match status" value="1"/>
</dbReference>
<dbReference type="PIRSF" id="PIRSF002155">
    <property type="entry name" value="Ribosomal_L1"/>
    <property type="match status" value="1"/>
</dbReference>
<dbReference type="SUPFAM" id="SSF56808">
    <property type="entry name" value="Ribosomal protein L1"/>
    <property type="match status" value="1"/>
</dbReference>
<dbReference type="PROSITE" id="PS01199">
    <property type="entry name" value="RIBOSOMAL_L1"/>
    <property type="match status" value="1"/>
</dbReference>
<protein>
    <recommendedName>
        <fullName evidence="1">Large ribosomal subunit protein uL1</fullName>
    </recommendedName>
    <alternativeName>
        <fullName evidence="2">50S ribosomal protein L1</fullName>
    </alternativeName>
</protein>
<proteinExistence type="inferred from homology"/>
<name>RL1_SHEB8</name>
<sequence length="233" mass="24602">MAKLTKRMRVIREKVDGTKSYDINEAVALLKELATAKFVESVDVAVNLGIDPRKSDQNVRGATVLPHGTGRDVRVAVFTQGANAEAAKAAGAELVGMDDLAEKIKAGEMNFDVVIASPDAMRVVGMLGQILGPRGLMPNPKTGTVTPNVAEAVKNAKAGQVRYRNDKNGIIHTTIGKVDFTPVQLKENLEALVSALKKAKPAVAKGIFVKKISISTTMGAGVAVDQATLETTV</sequence>
<keyword id="KW-0678">Repressor</keyword>
<keyword id="KW-0687">Ribonucleoprotein</keyword>
<keyword id="KW-0689">Ribosomal protein</keyword>
<keyword id="KW-0694">RNA-binding</keyword>
<keyword id="KW-0699">rRNA-binding</keyword>
<keyword id="KW-0810">Translation regulation</keyword>
<keyword id="KW-0820">tRNA-binding</keyword>
<organism>
    <name type="scientific">Shewanella baltica (strain OS185)</name>
    <dbReference type="NCBI Taxonomy" id="402882"/>
    <lineage>
        <taxon>Bacteria</taxon>
        <taxon>Pseudomonadati</taxon>
        <taxon>Pseudomonadota</taxon>
        <taxon>Gammaproteobacteria</taxon>
        <taxon>Alteromonadales</taxon>
        <taxon>Shewanellaceae</taxon>
        <taxon>Shewanella</taxon>
    </lineage>
</organism>
<evidence type="ECO:0000255" key="1">
    <source>
        <dbReference type="HAMAP-Rule" id="MF_01318"/>
    </source>
</evidence>
<evidence type="ECO:0000305" key="2"/>